<protein>
    <recommendedName>
        <fullName evidence="1">Erythronate-4-phosphate dehydrogenase</fullName>
        <ecNumber evidence="1">1.1.1.290</ecNumber>
    </recommendedName>
</protein>
<organism>
    <name type="scientific">Edwardsiella ictaluri (strain 93-146)</name>
    <dbReference type="NCBI Taxonomy" id="634503"/>
    <lineage>
        <taxon>Bacteria</taxon>
        <taxon>Pseudomonadati</taxon>
        <taxon>Pseudomonadota</taxon>
        <taxon>Gammaproteobacteria</taxon>
        <taxon>Enterobacterales</taxon>
        <taxon>Hafniaceae</taxon>
        <taxon>Edwardsiella</taxon>
    </lineage>
</organism>
<name>PDXB_EDWI9</name>
<keyword id="KW-0963">Cytoplasm</keyword>
<keyword id="KW-0520">NAD</keyword>
<keyword id="KW-0560">Oxidoreductase</keyword>
<keyword id="KW-0664">Pyridoxine biosynthesis</keyword>
<evidence type="ECO:0000255" key="1">
    <source>
        <dbReference type="HAMAP-Rule" id="MF_01825"/>
    </source>
</evidence>
<gene>
    <name evidence="1" type="primary">pdxB</name>
    <name type="ordered locus">NT01EI_2722</name>
</gene>
<accession>C5B8N0</accession>
<feature type="chain" id="PRO_1000216070" description="Erythronate-4-phosphate dehydrogenase">
    <location>
        <begin position="1"/>
        <end position="375"/>
    </location>
</feature>
<feature type="active site" evidence="1">
    <location>
        <position position="208"/>
    </location>
</feature>
<feature type="active site" evidence="1">
    <location>
        <position position="237"/>
    </location>
</feature>
<feature type="active site" description="Proton donor" evidence="1">
    <location>
        <position position="254"/>
    </location>
</feature>
<feature type="binding site" evidence="1">
    <location>
        <position position="45"/>
    </location>
    <ligand>
        <name>substrate</name>
    </ligand>
</feature>
<feature type="binding site" evidence="1">
    <location>
        <position position="66"/>
    </location>
    <ligand>
        <name>substrate</name>
    </ligand>
</feature>
<feature type="binding site" evidence="1">
    <location>
        <position position="146"/>
    </location>
    <ligand>
        <name>NAD(+)</name>
        <dbReference type="ChEBI" id="CHEBI:57540"/>
    </ligand>
</feature>
<feature type="binding site" evidence="1">
    <location>
        <position position="175"/>
    </location>
    <ligand>
        <name>NAD(+)</name>
        <dbReference type="ChEBI" id="CHEBI:57540"/>
    </ligand>
</feature>
<feature type="binding site" evidence="1">
    <location>
        <position position="232"/>
    </location>
    <ligand>
        <name>NAD(+)</name>
        <dbReference type="ChEBI" id="CHEBI:57540"/>
    </ligand>
</feature>
<feature type="binding site" evidence="1">
    <location>
        <position position="257"/>
    </location>
    <ligand>
        <name>NAD(+)</name>
        <dbReference type="ChEBI" id="CHEBI:57540"/>
    </ligand>
</feature>
<feature type="binding site" evidence="1">
    <location>
        <position position="258"/>
    </location>
    <ligand>
        <name>substrate</name>
    </ligand>
</feature>
<comment type="function">
    <text evidence="1">Catalyzes the oxidation of erythronate-4-phosphate to 3-hydroxy-2-oxo-4-phosphonooxybutanoate.</text>
</comment>
<comment type="catalytic activity">
    <reaction evidence="1">
        <text>4-phospho-D-erythronate + NAD(+) = (R)-3-hydroxy-2-oxo-4-phosphooxybutanoate + NADH + H(+)</text>
        <dbReference type="Rhea" id="RHEA:18829"/>
        <dbReference type="ChEBI" id="CHEBI:15378"/>
        <dbReference type="ChEBI" id="CHEBI:57540"/>
        <dbReference type="ChEBI" id="CHEBI:57945"/>
        <dbReference type="ChEBI" id="CHEBI:58538"/>
        <dbReference type="ChEBI" id="CHEBI:58766"/>
        <dbReference type="EC" id="1.1.1.290"/>
    </reaction>
</comment>
<comment type="pathway">
    <text evidence="1">Cofactor biosynthesis; pyridoxine 5'-phosphate biosynthesis; pyridoxine 5'-phosphate from D-erythrose 4-phosphate: step 2/5.</text>
</comment>
<comment type="subunit">
    <text evidence="1">Homodimer.</text>
</comment>
<comment type="subcellular location">
    <subcellularLocation>
        <location evidence="1">Cytoplasm</location>
    </subcellularLocation>
</comment>
<comment type="similarity">
    <text evidence="1">Belongs to the D-isomer specific 2-hydroxyacid dehydrogenase family. PdxB subfamily.</text>
</comment>
<reference key="1">
    <citation type="submission" date="2009-03" db="EMBL/GenBank/DDBJ databases">
        <title>Complete genome sequence of Edwardsiella ictaluri 93-146.</title>
        <authorList>
            <person name="Williams M.L."/>
            <person name="Gillaspy A.F."/>
            <person name="Dyer D.W."/>
            <person name="Thune R.L."/>
            <person name="Waldbieser G.C."/>
            <person name="Schuster S.C."/>
            <person name="Gipson J."/>
            <person name="Zaitshik J."/>
            <person name="Landry C."/>
            <person name="Lawrence M.L."/>
        </authorList>
    </citation>
    <scope>NUCLEOTIDE SEQUENCE [LARGE SCALE GENOMIC DNA]</scope>
    <source>
        <strain>93-146</strain>
    </source>
</reference>
<proteinExistence type="inferred from homology"/>
<dbReference type="EC" id="1.1.1.290" evidence="1"/>
<dbReference type="EMBL" id="CP001600">
    <property type="protein sequence ID" value="ACR69890.1"/>
    <property type="molecule type" value="Genomic_DNA"/>
</dbReference>
<dbReference type="RefSeq" id="WP_015871993.1">
    <property type="nucleotide sequence ID" value="NZ_CP169062.1"/>
</dbReference>
<dbReference type="SMR" id="C5B8N0"/>
<dbReference type="STRING" id="67780.B6E78_05590"/>
<dbReference type="GeneID" id="69539615"/>
<dbReference type="KEGG" id="eic:NT01EI_2722"/>
<dbReference type="PATRIC" id="fig|634503.3.peg.2435"/>
<dbReference type="HOGENOM" id="CLU_019796_4_0_6"/>
<dbReference type="OrthoDB" id="9770208at2"/>
<dbReference type="UniPathway" id="UPA00244">
    <property type="reaction ID" value="UER00310"/>
</dbReference>
<dbReference type="Proteomes" id="UP000001485">
    <property type="component" value="Chromosome"/>
</dbReference>
<dbReference type="GO" id="GO:0005829">
    <property type="term" value="C:cytosol"/>
    <property type="evidence" value="ECO:0007669"/>
    <property type="project" value="TreeGrafter"/>
</dbReference>
<dbReference type="GO" id="GO:0033711">
    <property type="term" value="F:4-phosphoerythronate dehydrogenase activity"/>
    <property type="evidence" value="ECO:0007669"/>
    <property type="project" value="UniProtKB-EC"/>
</dbReference>
<dbReference type="GO" id="GO:0051287">
    <property type="term" value="F:NAD binding"/>
    <property type="evidence" value="ECO:0007669"/>
    <property type="project" value="InterPro"/>
</dbReference>
<dbReference type="GO" id="GO:0046983">
    <property type="term" value="F:protein dimerization activity"/>
    <property type="evidence" value="ECO:0007669"/>
    <property type="project" value="InterPro"/>
</dbReference>
<dbReference type="GO" id="GO:0036001">
    <property type="term" value="P:'de novo' pyridoxal 5'-phosphate biosynthetic process"/>
    <property type="evidence" value="ECO:0007669"/>
    <property type="project" value="TreeGrafter"/>
</dbReference>
<dbReference type="GO" id="GO:0008615">
    <property type="term" value="P:pyridoxine biosynthetic process"/>
    <property type="evidence" value="ECO:0007669"/>
    <property type="project" value="UniProtKB-UniRule"/>
</dbReference>
<dbReference type="CDD" id="cd12158">
    <property type="entry name" value="ErythrP_dh"/>
    <property type="match status" value="1"/>
</dbReference>
<dbReference type="FunFam" id="3.40.50.720:FF:000093">
    <property type="entry name" value="Erythronate-4-phosphate dehydrogenase"/>
    <property type="match status" value="1"/>
</dbReference>
<dbReference type="Gene3D" id="3.30.1370.170">
    <property type="match status" value="1"/>
</dbReference>
<dbReference type="Gene3D" id="3.40.50.720">
    <property type="entry name" value="NAD(P)-binding Rossmann-like Domain"/>
    <property type="match status" value="2"/>
</dbReference>
<dbReference type="HAMAP" id="MF_01825">
    <property type="entry name" value="PdxB"/>
    <property type="match status" value="1"/>
</dbReference>
<dbReference type="InterPro" id="IPR006139">
    <property type="entry name" value="D-isomer_2_OHA_DH_cat_dom"/>
</dbReference>
<dbReference type="InterPro" id="IPR029753">
    <property type="entry name" value="D-isomer_DH_CS"/>
</dbReference>
<dbReference type="InterPro" id="IPR029752">
    <property type="entry name" value="D-isomer_DH_CS1"/>
</dbReference>
<dbReference type="InterPro" id="IPR006140">
    <property type="entry name" value="D-isomer_DH_NAD-bd"/>
</dbReference>
<dbReference type="InterPro" id="IPR020921">
    <property type="entry name" value="Erythronate-4-P_DHase"/>
</dbReference>
<dbReference type="InterPro" id="IPR024531">
    <property type="entry name" value="Erythronate-4-P_DHase_dimer"/>
</dbReference>
<dbReference type="InterPro" id="IPR036291">
    <property type="entry name" value="NAD(P)-bd_dom_sf"/>
</dbReference>
<dbReference type="InterPro" id="IPR038251">
    <property type="entry name" value="PdxB_dimer_sf"/>
</dbReference>
<dbReference type="NCBIfam" id="NF001309">
    <property type="entry name" value="PRK00257.1"/>
    <property type="match status" value="1"/>
</dbReference>
<dbReference type="PANTHER" id="PTHR42938">
    <property type="entry name" value="FORMATE DEHYDROGENASE 1"/>
    <property type="match status" value="1"/>
</dbReference>
<dbReference type="PANTHER" id="PTHR42938:SF9">
    <property type="entry name" value="FORMATE DEHYDROGENASE 1"/>
    <property type="match status" value="1"/>
</dbReference>
<dbReference type="Pfam" id="PF00389">
    <property type="entry name" value="2-Hacid_dh"/>
    <property type="match status" value="1"/>
</dbReference>
<dbReference type="Pfam" id="PF02826">
    <property type="entry name" value="2-Hacid_dh_C"/>
    <property type="match status" value="1"/>
</dbReference>
<dbReference type="Pfam" id="PF11890">
    <property type="entry name" value="DUF3410"/>
    <property type="match status" value="1"/>
</dbReference>
<dbReference type="SUPFAM" id="SSF52283">
    <property type="entry name" value="Formate/glycerate dehydrogenase catalytic domain-like"/>
    <property type="match status" value="1"/>
</dbReference>
<dbReference type="SUPFAM" id="SSF51735">
    <property type="entry name" value="NAD(P)-binding Rossmann-fold domains"/>
    <property type="match status" value="1"/>
</dbReference>
<dbReference type="PROSITE" id="PS00065">
    <property type="entry name" value="D_2_HYDROXYACID_DH_1"/>
    <property type="match status" value="1"/>
</dbReference>
<dbReference type="PROSITE" id="PS00671">
    <property type="entry name" value="D_2_HYDROXYACID_DH_3"/>
    <property type="match status" value="1"/>
</dbReference>
<sequence length="375" mass="40521">MKIVVDENMPYAEALFGRLGEVVAVRGRPLPAAALVGADALMVRSVTTVNQALLAGQRVRFVGTATAGTDHVDTAWLAQAGIGFSAAPGCNAIAVVEYVFSALMLLAERDGFALRDKTVGIVGVGNVGSRLQRRLTALGIRTLLCDPPRADRGDDEQFHSLADLQREADIITFHTPLNKSGPYRTLHLADADFLRGLPPGRILINAGRGAVVDNAALLQALEAGQDLRVVLDVWEPEPMLSLPLLARVDIATPHIAGYSLEGKARGTTQVFEAFSTFLGQPQSVVLPSLLPPPPVASVRIHGHPDQAMLKRLMHLVYDVRRDDVPLRRVAAQEGEFDRLRKHYPARREWSSLQVLCDDCTSASLLTALGFDARVA</sequence>